<sequence length="221" mass="25063">MDYRNQSLGALAIAIPRATKLFRQHQLDFCCGGKQTLLRAANKLNLDIDALEAQLSALQTEPHSSEDWQQQPLTNLISFIISRYHDRHREQLPELVLMAEKVERVHGEKPTCPRGLAAELSAILEELTQHMYKEEQILFPMIQRGMGSQASGPIFVMEAEHDAVGQQLDVVKQLTQNVTPPEGACNTWRALYTGINEFITDLMEHIHLENNLLFPRALRGE</sequence>
<name>YTFE_YERPG</name>
<comment type="function">
    <text evidence="1">Di-iron-containing protein involved in the repair of iron-sulfur clusters damaged by oxidative and nitrosative stress conditions.</text>
</comment>
<comment type="subunit">
    <text evidence="1">Homodimer.</text>
</comment>
<comment type="subcellular location">
    <subcellularLocation>
        <location evidence="1">Cytoplasm</location>
    </subcellularLocation>
</comment>
<comment type="similarity">
    <text evidence="1">Belongs to the RIC family. YtfE subfamily.</text>
</comment>
<dbReference type="EMBL" id="CP000901">
    <property type="protein sequence ID" value="ABX86442.1"/>
    <property type="molecule type" value="Genomic_DNA"/>
</dbReference>
<dbReference type="RefSeq" id="WP_002210159.1">
    <property type="nucleotide sequence ID" value="NZ_CP009935.1"/>
</dbReference>
<dbReference type="SMR" id="A9R568"/>
<dbReference type="GeneID" id="57975183"/>
<dbReference type="KEGG" id="ypg:YpAngola_A3955"/>
<dbReference type="PATRIC" id="fig|349746.12.peg.679"/>
<dbReference type="GO" id="GO:0005737">
    <property type="term" value="C:cytoplasm"/>
    <property type="evidence" value="ECO:0007669"/>
    <property type="project" value="UniProtKB-SubCell"/>
</dbReference>
<dbReference type="GO" id="GO:0046872">
    <property type="term" value="F:metal ion binding"/>
    <property type="evidence" value="ECO:0007669"/>
    <property type="project" value="UniProtKB-KW"/>
</dbReference>
<dbReference type="GO" id="GO:0030091">
    <property type="term" value="P:protein repair"/>
    <property type="evidence" value="ECO:0007669"/>
    <property type="project" value="UniProtKB-UniRule"/>
</dbReference>
<dbReference type="GO" id="GO:0051409">
    <property type="term" value="P:response to nitrosative stress"/>
    <property type="evidence" value="ECO:0007669"/>
    <property type="project" value="UniProtKB-UniRule"/>
</dbReference>
<dbReference type="GO" id="GO:0006979">
    <property type="term" value="P:response to oxidative stress"/>
    <property type="evidence" value="ECO:0007669"/>
    <property type="project" value="UniProtKB-UniRule"/>
</dbReference>
<dbReference type="CDD" id="cd12108">
    <property type="entry name" value="Hr-like"/>
    <property type="match status" value="1"/>
</dbReference>
<dbReference type="Gene3D" id="1.20.120.520">
    <property type="entry name" value="nmb1532 protein domain like"/>
    <property type="match status" value="1"/>
</dbReference>
<dbReference type="HAMAP" id="MF_01606">
    <property type="entry name" value="RIC_YtfE"/>
    <property type="match status" value="1"/>
</dbReference>
<dbReference type="InterPro" id="IPR023742">
    <property type="entry name" value="FeS-repair_YftE"/>
</dbReference>
<dbReference type="InterPro" id="IPR012312">
    <property type="entry name" value="Hemerythrin-like"/>
</dbReference>
<dbReference type="InterPro" id="IPR019903">
    <property type="entry name" value="RIC_family"/>
</dbReference>
<dbReference type="NCBIfam" id="TIGR03652">
    <property type="entry name" value="FeS_repair_RIC"/>
    <property type="match status" value="1"/>
</dbReference>
<dbReference type="NCBIfam" id="NF008221">
    <property type="entry name" value="PRK10992.1"/>
    <property type="match status" value="1"/>
</dbReference>
<dbReference type="PANTHER" id="PTHR36438">
    <property type="entry name" value="IRON-SULFUR CLUSTER REPAIR PROTEIN YTFE"/>
    <property type="match status" value="1"/>
</dbReference>
<dbReference type="PANTHER" id="PTHR36438:SF1">
    <property type="entry name" value="IRON-SULFUR CLUSTER REPAIR PROTEIN YTFE"/>
    <property type="match status" value="1"/>
</dbReference>
<dbReference type="Pfam" id="PF01814">
    <property type="entry name" value="Hemerythrin"/>
    <property type="match status" value="1"/>
</dbReference>
<dbReference type="Pfam" id="PF04405">
    <property type="entry name" value="ScdA_N"/>
    <property type="match status" value="1"/>
</dbReference>
<gene>
    <name evidence="1" type="primary">ytfE</name>
    <name type="ordered locus">YpAngola_A3955</name>
</gene>
<proteinExistence type="inferred from homology"/>
<feature type="chain" id="PRO_1000148192" description="Iron-sulfur cluster repair protein YtfE">
    <location>
        <begin position="1"/>
        <end position="221"/>
    </location>
</feature>
<accession>A9R568</accession>
<evidence type="ECO:0000255" key="1">
    <source>
        <dbReference type="HAMAP-Rule" id="MF_01606"/>
    </source>
</evidence>
<keyword id="KW-0963">Cytoplasm</keyword>
<keyword id="KW-0408">Iron</keyword>
<keyword id="KW-0479">Metal-binding</keyword>
<keyword id="KW-0346">Stress response</keyword>
<organism>
    <name type="scientific">Yersinia pestis bv. Antiqua (strain Angola)</name>
    <dbReference type="NCBI Taxonomy" id="349746"/>
    <lineage>
        <taxon>Bacteria</taxon>
        <taxon>Pseudomonadati</taxon>
        <taxon>Pseudomonadota</taxon>
        <taxon>Gammaproteobacteria</taxon>
        <taxon>Enterobacterales</taxon>
        <taxon>Yersiniaceae</taxon>
        <taxon>Yersinia</taxon>
    </lineage>
</organism>
<reference key="1">
    <citation type="journal article" date="2010" name="J. Bacteriol.">
        <title>Genome sequence of the deep-rooted Yersinia pestis strain Angola reveals new insights into the evolution and pangenome of the plague bacterium.</title>
        <authorList>
            <person name="Eppinger M."/>
            <person name="Worsham P.L."/>
            <person name="Nikolich M.P."/>
            <person name="Riley D.R."/>
            <person name="Sebastian Y."/>
            <person name="Mou S."/>
            <person name="Achtman M."/>
            <person name="Lindler L.E."/>
            <person name="Ravel J."/>
        </authorList>
    </citation>
    <scope>NUCLEOTIDE SEQUENCE [LARGE SCALE GENOMIC DNA]</scope>
    <source>
        <strain>Angola</strain>
    </source>
</reference>
<protein>
    <recommendedName>
        <fullName evidence="1">Iron-sulfur cluster repair protein YtfE</fullName>
    </recommendedName>
</protein>